<sequence>MNILFAGGGTGGHLYPAVAMAERLEQLYPGTTVAFVGTERGIEATEIPRLGYRLHLLDVRGFRRGFSFSDMLNNAGVLLDFVRAVVKAAGIIRAEQPDVVVGTGGFVSGPLLAAAELMGRKTLIQEQNAFPGVTTRFLAAFATEVHLSFEESRKFFRRKQGVFVTGNPARSFTGIDQAEAQSFFGLQPGLPTLLVFGGSRGARSINNAVKTWISGAAGKANIIWQTGSLDDERLRKEVEPSATLWIGPYINDMRMAYGAADLVLCRAGASTLAELTNLGKASVLVPYPYATGNHQFFNAKALVDAGAAELVADADIALDQSRTKVFSILADPELRLRMREACRKEGRPEAALDLAGRIAGLANIK</sequence>
<comment type="function">
    <text evidence="1">Cell wall formation. Catalyzes the transfer of a GlcNAc subunit on undecaprenyl-pyrophosphoryl-MurNAc-pentapeptide (lipid intermediate I) to form undecaprenyl-pyrophosphoryl-MurNAc-(pentapeptide)GlcNAc (lipid intermediate II).</text>
</comment>
<comment type="catalytic activity">
    <reaction evidence="1">
        <text>di-trans,octa-cis-undecaprenyl diphospho-N-acetyl-alpha-D-muramoyl-L-alanyl-D-glutamyl-meso-2,6-diaminopimeloyl-D-alanyl-D-alanine + UDP-N-acetyl-alpha-D-glucosamine = di-trans,octa-cis-undecaprenyl diphospho-[N-acetyl-alpha-D-glucosaminyl-(1-&gt;4)]-N-acetyl-alpha-D-muramoyl-L-alanyl-D-glutamyl-meso-2,6-diaminopimeloyl-D-alanyl-D-alanine + UDP + H(+)</text>
        <dbReference type="Rhea" id="RHEA:31227"/>
        <dbReference type="ChEBI" id="CHEBI:15378"/>
        <dbReference type="ChEBI" id="CHEBI:57705"/>
        <dbReference type="ChEBI" id="CHEBI:58223"/>
        <dbReference type="ChEBI" id="CHEBI:61387"/>
        <dbReference type="ChEBI" id="CHEBI:61388"/>
        <dbReference type="EC" id="2.4.1.227"/>
    </reaction>
</comment>
<comment type="pathway">
    <text evidence="1">Cell wall biogenesis; peptidoglycan biosynthesis.</text>
</comment>
<comment type="subcellular location">
    <subcellularLocation>
        <location evidence="1">Cell inner membrane</location>
        <topology evidence="1">Peripheral membrane protein</topology>
        <orientation evidence="1">Cytoplasmic side</orientation>
    </subcellularLocation>
</comment>
<comment type="similarity">
    <text evidence="1">Belongs to the glycosyltransferase 28 family. MurG subfamily.</text>
</comment>
<protein>
    <recommendedName>
        <fullName evidence="1">UDP-N-acetylglucosamine--N-acetylmuramyl-(pentapeptide) pyrophosphoryl-undecaprenol N-acetylglucosamine transferase</fullName>
        <ecNumber evidence="1">2.4.1.227</ecNumber>
    </recommendedName>
    <alternativeName>
        <fullName evidence="1">Undecaprenyl-PP-MurNAc-pentapeptide-UDPGlcNAc GlcNAc transferase</fullName>
    </alternativeName>
</protein>
<gene>
    <name evidence="1" type="primary">murG</name>
    <name type="ordered locus">Paes_2263</name>
</gene>
<reference key="1">
    <citation type="submission" date="2008-06" db="EMBL/GenBank/DDBJ databases">
        <title>Complete sequence of chromosome of Prosthecochloris aestuarii DSM 271.</title>
        <authorList>
            <consortium name="US DOE Joint Genome Institute"/>
            <person name="Lucas S."/>
            <person name="Copeland A."/>
            <person name="Lapidus A."/>
            <person name="Glavina del Rio T."/>
            <person name="Dalin E."/>
            <person name="Tice H."/>
            <person name="Bruce D."/>
            <person name="Goodwin L."/>
            <person name="Pitluck S."/>
            <person name="Schmutz J."/>
            <person name="Larimer F."/>
            <person name="Land M."/>
            <person name="Hauser L."/>
            <person name="Kyrpides N."/>
            <person name="Anderson I."/>
            <person name="Liu Z."/>
            <person name="Li T."/>
            <person name="Zhao F."/>
            <person name="Overmann J."/>
            <person name="Bryant D.A."/>
            <person name="Richardson P."/>
        </authorList>
    </citation>
    <scope>NUCLEOTIDE SEQUENCE [LARGE SCALE GENOMIC DNA]</scope>
    <source>
        <strain>DSM 271 / SK 413</strain>
    </source>
</reference>
<organism>
    <name type="scientific">Prosthecochloris aestuarii (strain DSM 271 / SK 413)</name>
    <dbReference type="NCBI Taxonomy" id="290512"/>
    <lineage>
        <taxon>Bacteria</taxon>
        <taxon>Pseudomonadati</taxon>
        <taxon>Chlorobiota</taxon>
        <taxon>Chlorobiia</taxon>
        <taxon>Chlorobiales</taxon>
        <taxon>Chlorobiaceae</taxon>
        <taxon>Prosthecochloris</taxon>
    </lineage>
</organism>
<keyword id="KW-0131">Cell cycle</keyword>
<keyword id="KW-0132">Cell division</keyword>
<keyword id="KW-0997">Cell inner membrane</keyword>
<keyword id="KW-1003">Cell membrane</keyword>
<keyword id="KW-0133">Cell shape</keyword>
<keyword id="KW-0961">Cell wall biogenesis/degradation</keyword>
<keyword id="KW-0328">Glycosyltransferase</keyword>
<keyword id="KW-0472">Membrane</keyword>
<keyword id="KW-0573">Peptidoglycan synthesis</keyword>
<keyword id="KW-0808">Transferase</keyword>
<feature type="chain" id="PRO_1000090459" description="UDP-N-acetylglucosamine--N-acetylmuramyl-(pentapeptide) pyrophosphoryl-undecaprenol N-acetylglucosamine transferase">
    <location>
        <begin position="1"/>
        <end position="365"/>
    </location>
</feature>
<feature type="binding site" evidence="1">
    <location>
        <begin position="10"/>
        <end position="12"/>
    </location>
    <ligand>
        <name>UDP-N-acetyl-alpha-D-glucosamine</name>
        <dbReference type="ChEBI" id="CHEBI:57705"/>
    </ligand>
</feature>
<feature type="binding site" evidence="1">
    <location>
        <position position="128"/>
    </location>
    <ligand>
        <name>UDP-N-acetyl-alpha-D-glucosamine</name>
        <dbReference type="ChEBI" id="CHEBI:57705"/>
    </ligand>
</feature>
<feature type="binding site" evidence="1">
    <location>
        <position position="170"/>
    </location>
    <ligand>
        <name>UDP-N-acetyl-alpha-D-glucosamine</name>
        <dbReference type="ChEBI" id="CHEBI:57705"/>
    </ligand>
</feature>
<feature type="binding site" evidence="1">
    <location>
        <position position="199"/>
    </location>
    <ligand>
        <name>UDP-N-acetyl-alpha-D-glucosamine</name>
        <dbReference type="ChEBI" id="CHEBI:57705"/>
    </ligand>
</feature>
<feature type="binding site" evidence="1">
    <location>
        <position position="250"/>
    </location>
    <ligand>
        <name>UDP-N-acetyl-alpha-D-glucosamine</name>
        <dbReference type="ChEBI" id="CHEBI:57705"/>
    </ligand>
</feature>
<feature type="binding site" evidence="1">
    <location>
        <position position="295"/>
    </location>
    <ligand>
        <name>UDP-N-acetyl-alpha-D-glucosamine</name>
        <dbReference type="ChEBI" id="CHEBI:57705"/>
    </ligand>
</feature>
<name>MURG_PROA2</name>
<accession>B4S6Q9</accession>
<proteinExistence type="inferred from homology"/>
<dbReference type="EC" id="2.4.1.227" evidence="1"/>
<dbReference type="EMBL" id="CP001108">
    <property type="protein sequence ID" value="ACF47264.1"/>
    <property type="molecule type" value="Genomic_DNA"/>
</dbReference>
<dbReference type="RefSeq" id="WP_012506794.1">
    <property type="nucleotide sequence ID" value="NC_011059.1"/>
</dbReference>
<dbReference type="SMR" id="B4S6Q9"/>
<dbReference type="STRING" id="290512.Paes_2263"/>
<dbReference type="CAZy" id="GT28">
    <property type="family name" value="Glycosyltransferase Family 28"/>
</dbReference>
<dbReference type="KEGG" id="paa:Paes_2263"/>
<dbReference type="eggNOG" id="COG0707">
    <property type="taxonomic scope" value="Bacteria"/>
</dbReference>
<dbReference type="HOGENOM" id="CLU_037404_0_1_10"/>
<dbReference type="UniPathway" id="UPA00219"/>
<dbReference type="Proteomes" id="UP000002725">
    <property type="component" value="Chromosome"/>
</dbReference>
<dbReference type="GO" id="GO:0005886">
    <property type="term" value="C:plasma membrane"/>
    <property type="evidence" value="ECO:0007669"/>
    <property type="project" value="UniProtKB-SubCell"/>
</dbReference>
<dbReference type="GO" id="GO:0051991">
    <property type="term" value="F:UDP-N-acetyl-D-glucosamine:N-acetylmuramoyl-L-alanyl-D-glutamyl-meso-2,6-diaminopimelyl-D-alanyl-D-alanine-diphosphoundecaprenol 4-beta-N-acetylglucosaminlytransferase activity"/>
    <property type="evidence" value="ECO:0007669"/>
    <property type="project" value="RHEA"/>
</dbReference>
<dbReference type="GO" id="GO:0050511">
    <property type="term" value="F:undecaprenyldiphospho-muramoylpentapeptide beta-N-acetylglucosaminyltransferase activity"/>
    <property type="evidence" value="ECO:0007669"/>
    <property type="project" value="UniProtKB-UniRule"/>
</dbReference>
<dbReference type="GO" id="GO:0005975">
    <property type="term" value="P:carbohydrate metabolic process"/>
    <property type="evidence" value="ECO:0007669"/>
    <property type="project" value="InterPro"/>
</dbReference>
<dbReference type="GO" id="GO:0051301">
    <property type="term" value="P:cell division"/>
    <property type="evidence" value="ECO:0007669"/>
    <property type="project" value="UniProtKB-KW"/>
</dbReference>
<dbReference type="GO" id="GO:0071555">
    <property type="term" value="P:cell wall organization"/>
    <property type="evidence" value="ECO:0007669"/>
    <property type="project" value="UniProtKB-KW"/>
</dbReference>
<dbReference type="GO" id="GO:0030259">
    <property type="term" value="P:lipid glycosylation"/>
    <property type="evidence" value="ECO:0007669"/>
    <property type="project" value="UniProtKB-UniRule"/>
</dbReference>
<dbReference type="GO" id="GO:0009252">
    <property type="term" value="P:peptidoglycan biosynthetic process"/>
    <property type="evidence" value="ECO:0007669"/>
    <property type="project" value="UniProtKB-UniRule"/>
</dbReference>
<dbReference type="GO" id="GO:0008360">
    <property type="term" value="P:regulation of cell shape"/>
    <property type="evidence" value="ECO:0007669"/>
    <property type="project" value="UniProtKB-KW"/>
</dbReference>
<dbReference type="CDD" id="cd03785">
    <property type="entry name" value="GT28_MurG"/>
    <property type="match status" value="1"/>
</dbReference>
<dbReference type="Gene3D" id="3.40.50.2000">
    <property type="entry name" value="Glycogen Phosphorylase B"/>
    <property type="match status" value="2"/>
</dbReference>
<dbReference type="HAMAP" id="MF_00033">
    <property type="entry name" value="MurG"/>
    <property type="match status" value="1"/>
</dbReference>
<dbReference type="InterPro" id="IPR006009">
    <property type="entry name" value="GlcNAc_MurG"/>
</dbReference>
<dbReference type="InterPro" id="IPR007235">
    <property type="entry name" value="Glyco_trans_28_C"/>
</dbReference>
<dbReference type="InterPro" id="IPR004276">
    <property type="entry name" value="GlycoTrans_28_N"/>
</dbReference>
<dbReference type="NCBIfam" id="TIGR01133">
    <property type="entry name" value="murG"/>
    <property type="match status" value="1"/>
</dbReference>
<dbReference type="PANTHER" id="PTHR21015:SF22">
    <property type="entry name" value="GLYCOSYLTRANSFERASE"/>
    <property type="match status" value="1"/>
</dbReference>
<dbReference type="PANTHER" id="PTHR21015">
    <property type="entry name" value="UDP-N-ACETYLGLUCOSAMINE--N-ACETYLMURAMYL-(PENTAPEPTIDE) PYROPHOSPHORYL-UNDECAPRENOL N-ACETYLGLUCOSAMINE TRANSFERASE 1"/>
    <property type="match status" value="1"/>
</dbReference>
<dbReference type="Pfam" id="PF04101">
    <property type="entry name" value="Glyco_tran_28_C"/>
    <property type="match status" value="1"/>
</dbReference>
<dbReference type="Pfam" id="PF03033">
    <property type="entry name" value="Glyco_transf_28"/>
    <property type="match status" value="1"/>
</dbReference>
<dbReference type="SUPFAM" id="SSF53756">
    <property type="entry name" value="UDP-Glycosyltransferase/glycogen phosphorylase"/>
    <property type="match status" value="1"/>
</dbReference>
<evidence type="ECO:0000255" key="1">
    <source>
        <dbReference type="HAMAP-Rule" id="MF_00033"/>
    </source>
</evidence>